<dbReference type="EMBL" id="ASHU01000009">
    <property type="protein sequence ID" value="EOR83458.1"/>
    <property type="molecule type" value="Genomic_DNA"/>
</dbReference>
<dbReference type="RefSeq" id="WP_005157856.1">
    <property type="nucleotide sequence ID" value="NZ_ASHU01000009.1"/>
</dbReference>
<dbReference type="PDB" id="4W6V">
    <property type="method" value="X-ray"/>
    <property type="resolution" value="3.02 A"/>
    <property type="chains" value="A=1-511"/>
</dbReference>
<dbReference type="PDB" id="7Q0L">
    <property type="method" value="X-ray"/>
    <property type="resolution" value="2.71 A"/>
    <property type="chains" value="A=1-511"/>
</dbReference>
<dbReference type="PDB" id="7Q0M">
    <property type="method" value="X-ray"/>
    <property type="resolution" value="2.54 A"/>
    <property type="chains" value="A=1-511"/>
</dbReference>
<dbReference type="PDBsum" id="4W6V"/>
<dbReference type="PDBsum" id="7Q0L"/>
<dbReference type="PDBsum" id="7Q0M"/>
<dbReference type="SMR" id="A0A2R9TD79"/>
<dbReference type="EvolutionaryTrace" id="A0A2R9TD79"/>
<dbReference type="GO" id="GO:0005886">
    <property type="term" value="C:plasma membrane"/>
    <property type="evidence" value="ECO:0007669"/>
    <property type="project" value="UniProtKB-SubCell"/>
</dbReference>
<dbReference type="GO" id="GO:1904680">
    <property type="term" value="F:peptide transmembrane transporter activity"/>
    <property type="evidence" value="ECO:0007669"/>
    <property type="project" value="InterPro"/>
</dbReference>
<dbReference type="GO" id="GO:0006857">
    <property type="term" value="P:oligopeptide transport"/>
    <property type="evidence" value="ECO:0007669"/>
    <property type="project" value="InterPro"/>
</dbReference>
<dbReference type="GO" id="GO:0015031">
    <property type="term" value="P:protein transport"/>
    <property type="evidence" value="ECO:0007669"/>
    <property type="project" value="UniProtKB-KW"/>
</dbReference>
<dbReference type="CDD" id="cd17346">
    <property type="entry name" value="MFS_DtpA_like"/>
    <property type="match status" value="1"/>
</dbReference>
<dbReference type="Gene3D" id="1.20.1250.20">
    <property type="entry name" value="MFS general substrate transporter like domains"/>
    <property type="match status" value="1"/>
</dbReference>
<dbReference type="InterPro" id="IPR005279">
    <property type="entry name" value="Dipep/tripep_permease"/>
</dbReference>
<dbReference type="InterPro" id="IPR020846">
    <property type="entry name" value="MFS_dom"/>
</dbReference>
<dbReference type="InterPro" id="IPR036259">
    <property type="entry name" value="MFS_trans_sf"/>
</dbReference>
<dbReference type="InterPro" id="IPR050171">
    <property type="entry name" value="MFS_Transporters"/>
</dbReference>
<dbReference type="InterPro" id="IPR000109">
    <property type="entry name" value="POT_fam"/>
</dbReference>
<dbReference type="InterPro" id="IPR018456">
    <property type="entry name" value="PTR2_symporter_CS"/>
</dbReference>
<dbReference type="NCBIfam" id="TIGR00924">
    <property type="entry name" value="yjdL_sub1_fam"/>
    <property type="match status" value="1"/>
</dbReference>
<dbReference type="PANTHER" id="PTHR23517:SF15">
    <property type="entry name" value="PROTON-DEPENDENT OLIGOPEPTIDE FAMILY TRANSPORT PROTEIN"/>
    <property type="match status" value="1"/>
</dbReference>
<dbReference type="PANTHER" id="PTHR23517">
    <property type="entry name" value="RESISTANCE PROTEIN MDTM, PUTATIVE-RELATED-RELATED"/>
    <property type="match status" value="1"/>
</dbReference>
<dbReference type="Pfam" id="PF00854">
    <property type="entry name" value="PTR2"/>
    <property type="match status" value="1"/>
</dbReference>
<dbReference type="SUPFAM" id="SSF103473">
    <property type="entry name" value="MFS general substrate transporter"/>
    <property type="match status" value="1"/>
</dbReference>
<dbReference type="PROSITE" id="PS50850">
    <property type="entry name" value="MFS"/>
    <property type="match status" value="1"/>
</dbReference>
<dbReference type="PROSITE" id="PS01022">
    <property type="entry name" value="PTR2_1"/>
    <property type="match status" value="1"/>
</dbReference>
<dbReference type="PROSITE" id="PS01023">
    <property type="entry name" value="PTR2_2"/>
    <property type="match status" value="1"/>
</dbReference>
<proteinExistence type="evidence at protein level"/>
<protein>
    <recommendedName>
        <fullName evidence="2">Peptide transporter YePEPT</fullName>
    </recommendedName>
</protein>
<organism>
    <name type="scientific">Yersinia enterocolitica subsp. palearctica serotype O:3 (strain YE-P4)</name>
    <dbReference type="NCBI Taxonomy" id="1329364"/>
    <lineage>
        <taxon>Bacteria</taxon>
        <taxon>Pseudomonadati</taxon>
        <taxon>Pseudomonadota</taxon>
        <taxon>Gammaproteobacteria</taxon>
        <taxon>Enterobacterales</taxon>
        <taxon>Yersiniaceae</taxon>
        <taxon>Yersinia</taxon>
    </lineage>
</organism>
<evidence type="ECO:0000269" key="1">
    <source>
    </source>
</evidence>
<evidence type="ECO:0000303" key="2">
    <source>
    </source>
</evidence>
<evidence type="ECO:0000305" key="3"/>
<evidence type="ECO:0000305" key="4">
    <source>
    </source>
</evidence>
<evidence type="ECO:0000312" key="5">
    <source>
        <dbReference type="EMBL" id="EOR83458.1"/>
    </source>
</evidence>
<evidence type="ECO:0007744" key="6">
    <source>
        <dbReference type="PDB" id="4W6V"/>
    </source>
</evidence>
<evidence type="ECO:0007829" key="7">
    <source>
        <dbReference type="PDB" id="4W6V"/>
    </source>
</evidence>
<evidence type="ECO:0007829" key="8">
    <source>
        <dbReference type="PDB" id="7Q0M"/>
    </source>
</evidence>
<reference key="1">
    <citation type="journal article" date="2013" name="Genome Announc.">
        <title>Genome sequences of four Yersinia enterocolitica bioserotype 4/O:3 isolates from mammals.</title>
        <authorList>
            <person name="Garzetti D."/>
            <person name="Heesemann J."/>
            <person name="Rakin A."/>
        </authorList>
    </citation>
    <scope>NUCLEOTIDE SEQUENCE [LARGE SCALE GENOMIC DNA]</scope>
    <source>
        <strain>YE-P4</strain>
    </source>
</reference>
<reference evidence="6" key="2">
    <citation type="journal article" date="2015" name="BMC Biol.">
        <title>Role of electrostatic interactions for ligand recognition and specificity of peptide transporters.</title>
        <authorList>
            <person name="Boggavarapu R."/>
            <person name="Jeckelmann J.M."/>
            <person name="Harder D."/>
            <person name="Ucurum Z."/>
            <person name="Fotiadis D."/>
        </authorList>
    </citation>
    <scope>X-RAY CRYSTALLOGRAPHY (3.02 ANGSTROMS)</scope>
    <scope>FUNCTION</scope>
    <scope>ACTIVITY REGULATION</scope>
    <scope>BIOPHYSICOCHEMICAL PROPERTIES</scope>
    <scope>SUBCELLULAR LOCATION</scope>
    <scope>TOPOLOGY</scope>
    <scope>MUTAGENESIS OF PHE-311 AND LYS-314</scope>
    <source>
        <strain>YE-P4</strain>
    </source>
</reference>
<name>PEPT_YERP4</name>
<feature type="chain" id="PRO_0000450336" description="Peptide transporter YePEPT">
    <location>
        <begin position="1"/>
        <end position="511"/>
    </location>
</feature>
<feature type="topological domain" description="Cytoplasmic" evidence="4">
    <location>
        <begin position="1"/>
        <end position="19"/>
    </location>
</feature>
<feature type="transmembrane region" description="Helical" evidence="4">
    <location>
        <begin position="20"/>
        <end position="45"/>
    </location>
</feature>
<feature type="topological domain" description="Periplasmic" evidence="3">
    <location>
        <begin position="46"/>
        <end position="59"/>
    </location>
</feature>
<feature type="transmembrane region" description="Helical" evidence="4">
    <location>
        <begin position="60"/>
        <end position="84"/>
    </location>
</feature>
<feature type="topological domain" description="Cytoplasmic" evidence="3">
    <location>
        <begin position="85"/>
        <end position="88"/>
    </location>
</feature>
<feature type="transmembrane region" description="Helical" evidence="4">
    <location>
        <begin position="89"/>
        <end position="109"/>
    </location>
</feature>
<feature type="topological domain" description="Periplasmic" evidence="3">
    <location>
        <begin position="110"/>
        <end position="115"/>
    </location>
</feature>
<feature type="transmembrane region" description="Helical" evidence="4">
    <location>
        <begin position="116"/>
        <end position="138"/>
    </location>
</feature>
<feature type="topological domain" description="Cytoplasmic" evidence="3">
    <location>
        <begin position="139"/>
        <end position="149"/>
    </location>
</feature>
<feature type="transmembrane region" description="Helical" evidence="4">
    <location>
        <begin position="150"/>
        <end position="175"/>
    </location>
</feature>
<feature type="topological domain" description="Periplasmic" evidence="3">
    <location>
        <begin position="176"/>
        <end position="181"/>
    </location>
</feature>
<feature type="transmembrane region" description="Helical" evidence="4">
    <location>
        <begin position="182"/>
        <end position="208"/>
    </location>
</feature>
<feature type="topological domain" description="Cytoplasmic" evidence="3">
    <location>
        <begin position="209"/>
        <end position="232"/>
    </location>
</feature>
<feature type="transmembrane region" description="Helical" evidence="4">
    <location>
        <begin position="233"/>
        <end position="253"/>
    </location>
</feature>
<feature type="topological domain" description="Periplasmic" evidence="3">
    <location>
        <begin position="254"/>
        <end position="256"/>
    </location>
</feature>
<feature type="transmembrane region" description="Helical" evidence="4">
    <location>
        <begin position="257"/>
        <end position="279"/>
    </location>
</feature>
<feature type="topological domain" description="Cytoplasmic" evidence="3">
    <location>
        <begin position="280"/>
        <end position="294"/>
    </location>
</feature>
<feature type="transmembrane region" description="Helical" evidence="4">
    <location>
        <begin position="295"/>
        <end position="321"/>
    </location>
</feature>
<feature type="topological domain" description="Periplasmic" evidence="3">
    <location>
        <begin position="322"/>
        <end position="335"/>
    </location>
</feature>
<feature type="transmembrane region" description="Helical" evidence="4">
    <location>
        <begin position="336"/>
        <end position="357"/>
    </location>
</feature>
<feature type="topological domain" description="Cytoplasmic" evidence="3">
    <location>
        <begin position="358"/>
        <end position="369"/>
    </location>
</feature>
<feature type="transmembrane region" description="Helical" evidence="4">
    <location>
        <begin position="370"/>
        <end position="396"/>
    </location>
</feature>
<feature type="topological domain" description="Periplasmic" evidence="3">
    <location>
        <begin position="397"/>
        <end position="405"/>
    </location>
</feature>
<feature type="transmembrane region" description="Helical" evidence="4">
    <location>
        <begin position="406"/>
        <end position="426"/>
    </location>
</feature>
<feature type="topological domain" description="Cytoplasmic" evidence="3">
    <location>
        <begin position="427"/>
        <end position="441"/>
    </location>
</feature>
<feature type="transmembrane region" description="Helical" evidence="4">
    <location>
        <begin position="442"/>
        <end position="462"/>
    </location>
</feature>
<feature type="topological domain" description="Periplasmic" evidence="3">
    <location>
        <begin position="463"/>
        <end position="471"/>
    </location>
</feature>
<feature type="transmembrane region" description="Helical" evidence="4">
    <location>
        <begin position="472"/>
        <end position="496"/>
    </location>
</feature>
<feature type="topological domain" description="Cytoplasmic" evidence="4">
    <location>
        <begin position="497"/>
        <end position="511"/>
    </location>
</feature>
<feature type="mutagenesis site" description="Almost loss of activity." evidence="1">
    <original>F</original>
    <variation>A</variation>
    <location>
        <position position="311"/>
    </location>
</feature>
<feature type="mutagenesis site" description="Abolishes specificity for charged residues." evidence="1">
    <original>K</original>
    <variation>A</variation>
    <location>
        <position position="314"/>
    </location>
</feature>
<feature type="mutagenesis site" description="Loses the specificity for negatively charged amino acids in the N-terminal position and acquires specificity for dipeptides with a positively charged amino acid side chain in that position." evidence="1">
    <original>K</original>
    <variation>E</variation>
    <location>
        <position position="314"/>
    </location>
</feature>
<feature type="turn" evidence="7">
    <location>
        <begin position="8"/>
        <end position="11"/>
    </location>
</feature>
<feature type="helix" evidence="8">
    <location>
        <begin position="20"/>
        <end position="46"/>
    </location>
</feature>
<feature type="turn" evidence="8">
    <location>
        <begin position="49"/>
        <end position="52"/>
    </location>
</feature>
<feature type="helix" evidence="8">
    <location>
        <begin position="58"/>
        <end position="85"/>
    </location>
</feature>
<feature type="helix" evidence="8">
    <location>
        <begin position="89"/>
        <end position="113"/>
    </location>
</feature>
<feature type="helix" evidence="8">
    <location>
        <begin position="116"/>
        <end position="142"/>
    </location>
</feature>
<feature type="helix" evidence="8">
    <location>
        <begin position="153"/>
        <end position="180"/>
    </location>
</feature>
<feature type="helix" evidence="8">
    <location>
        <begin position="182"/>
        <end position="202"/>
    </location>
</feature>
<feature type="helix" evidence="8">
    <location>
        <begin position="204"/>
        <end position="214"/>
    </location>
</feature>
<feature type="helix" evidence="8">
    <location>
        <begin position="219"/>
        <end position="221"/>
    </location>
</feature>
<feature type="helix" evidence="8">
    <location>
        <begin position="233"/>
        <end position="252"/>
    </location>
</feature>
<feature type="helix" evidence="8">
    <location>
        <begin position="258"/>
        <end position="283"/>
    </location>
</feature>
<feature type="helix" evidence="8">
    <location>
        <begin position="288"/>
        <end position="311"/>
    </location>
</feature>
<feature type="turn" evidence="8">
    <location>
        <begin position="312"/>
        <end position="316"/>
    </location>
</feature>
<feature type="helix" evidence="8">
    <location>
        <begin position="317"/>
        <end position="324"/>
    </location>
</feature>
<feature type="strand" evidence="8">
    <location>
        <begin position="329"/>
        <end position="332"/>
    </location>
</feature>
<feature type="helix" evidence="8">
    <location>
        <begin position="337"/>
        <end position="341"/>
    </location>
</feature>
<feature type="helix" evidence="8">
    <location>
        <begin position="343"/>
        <end position="357"/>
    </location>
</feature>
<feature type="helix" evidence="8">
    <location>
        <begin position="371"/>
        <end position="398"/>
    </location>
</feature>
<feature type="turn" evidence="8">
    <location>
        <begin position="399"/>
        <end position="401"/>
    </location>
</feature>
<feature type="helix" evidence="8">
    <location>
        <begin position="407"/>
        <end position="423"/>
    </location>
</feature>
<feature type="turn" evidence="8">
    <location>
        <begin position="424"/>
        <end position="426"/>
    </location>
</feature>
<feature type="helix" evidence="8">
    <location>
        <begin position="427"/>
        <end position="434"/>
    </location>
</feature>
<feature type="turn" evidence="8">
    <location>
        <begin position="437"/>
        <end position="439"/>
    </location>
</feature>
<feature type="helix" evidence="8">
    <location>
        <begin position="440"/>
        <end position="462"/>
    </location>
</feature>
<feature type="helix" evidence="8">
    <location>
        <begin position="467"/>
        <end position="472"/>
    </location>
</feature>
<feature type="helix" evidence="8">
    <location>
        <begin position="473"/>
        <end position="493"/>
    </location>
</feature>
<feature type="helix" evidence="8">
    <location>
        <begin position="495"/>
        <end position="502"/>
    </location>
</feature>
<keyword id="KW-0002">3D-structure</keyword>
<keyword id="KW-0997">Cell inner membrane</keyword>
<keyword id="KW-1003">Cell membrane</keyword>
<keyword id="KW-0472">Membrane</keyword>
<keyword id="KW-0571">Peptide transport</keyword>
<keyword id="KW-0653">Protein transport</keyword>
<keyword id="KW-0812">Transmembrane</keyword>
<keyword id="KW-1133">Transmembrane helix</keyword>
<keyword id="KW-0813">Transport</keyword>
<gene>
    <name evidence="5" type="ORF">YEP4_02370</name>
</gene>
<accession>A0A2R9TD79</accession>
<accession>A0A0M3KKZ1</accession>
<comment type="function">
    <text evidence="1">Mediates the proton-dependent uptake of dipeptides. Shows higher affinity for dipeptides with a negatively charged amino acid residue at the N-terminal position, such as Asp-Ala and Glu-Ala. Also displays specificity for Ala-Ala, Ala-Tyr and Tyr-Ala.</text>
</comment>
<comment type="activity regulation">
    <text evidence="1">Transport is inhibited by the proton ionophore carbonyl cyanide m-chlorophenylhydrazone (CCCP).</text>
</comment>
<comment type="biophysicochemical properties">
    <kinetics>
        <KM evidence="1">199 uM for Ala-Ala</KM>
    </kinetics>
</comment>
<comment type="subcellular location">
    <subcellularLocation>
        <location evidence="4">Cell inner membrane</location>
        <topology evidence="1">Multi-pass membrane protein</topology>
    </subcellularLocation>
</comment>
<comment type="similarity">
    <text evidence="3">Belongs to the major facilitator superfamily. Proton-dependent oligopeptide transporter (POT/PTR) (TC 2.A.17) family.</text>
</comment>
<sequence length="511" mass="55499">MQTSTNTPGGRTFFGHPYPLSGLFLSEMWERFSFYGIRPLLILFMAATVFDGGMGLPREQASAIVGIFAGSMYLAALPGGLLADNWLGQQRAVWYGSILIALGHLSIALSAFFGNDLFFIGLVFIVLGTGLFKTCISVMVGTLYKPGDARRDGGFSLFYMGINMGSFIAPLLSGWLLRTHGWHWGFGIGGIGMLVALLIFRGFAIPAMKRYDAEVGLDSSWNKPTNQRQGVGRWVTAIMAVVVVIIALISQGVIPINPVMIASLLVYVIAASVTLYFIYLFAFAKMSRKDRARLLVCFILLVSAAFFWSAFEQKPTSFNLFANDYTDRMVMGFEIPTVWFQSINALFIILLAPVFSWAWPALAKKKIQPSSITKFVIGILCAAAGFAVMMYAAQHVLSSGGAGVSPLWLVMSILLLTLGELCLSPIGLATMTLLAPDRMRGQVMGLWFCASSLGNLAAGLIGGHVKADQLDMLPTLFARCSIALVICAAVLILLIVPIRRLMNNTQGQQTA</sequence>